<organism>
    <name type="scientific">Arabidopsis thaliana</name>
    <name type="common">Mouse-ear cress</name>
    <dbReference type="NCBI Taxonomy" id="3702"/>
    <lineage>
        <taxon>Eukaryota</taxon>
        <taxon>Viridiplantae</taxon>
        <taxon>Streptophyta</taxon>
        <taxon>Embryophyta</taxon>
        <taxon>Tracheophyta</taxon>
        <taxon>Spermatophyta</taxon>
        <taxon>Magnoliopsida</taxon>
        <taxon>eudicotyledons</taxon>
        <taxon>Gunneridae</taxon>
        <taxon>Pentapetalae</taxon>
        <taxon>rosids</taxon>
        <taxon>malvids</taxon>
        <taxon>Brassicales</taxon>
        <taxon>Brassicaceae</taxon>
        <taxon>Camelineae</taxon>
        <taxon>Arabidopsis</taxon>
    </lineage>
</organism>
<protein>
    <recommendedName>
        <fullName>Putative pectinesterase/pectinesterase inhibitor 28</fullName>
    </recommendedName>
    <domain>
        <recommendedName>
            <fullName>Pectinesterase inhibitor 28</fullName>
        </recommendedName>
        <alternativeName>
            <fullName>Pectin methylesterase inhibitor 28</fullName>
        </alternativeName>
    </domain>
    <domain>
        <recommendedName>
            <fullName>Pectinesterase 28</fullName>
            <shortName>PE 28</shortName>
            <ecNumber>3.1.1.11</ecNumber>
        </recommendedName>
        <alternativeName>
            <fullName>Pectin methylesterase 28</fullName>
            <shortName>AtPME28</shortName>
        </alternativeName>
    </domain>
</protein>
<proteinExistence type="evidence at transcript level"/>
<reference key="1">
    <citation type="journal article" date="2000" name="Nature">
        <title>Sequence and analysis of chromosome 5 of the plant Arabidopsis thaliana.</title>
        <authorList>
            <person name="Tabata S."/>
            <person name="Kaneko T."/>
            <person name="Nakamura Y."/>
            <person name="Kotani H."/>
            <person name="Kato T."/>
            <person name="Asamizu E."/>
            <person name="Miyajima N."/>
            <person name="Sasamoto S."/>
            <person name="Kimura T."/>
            <person name="Hosouchi T."/>
            <person name="Kawashima K."/>
            <person name="Kohara M."/>
            <person name="Matsumoto M."/>
            <person name="Matsuno A."/>
            <person name="Muraki A."/>
            <person name="Nakayama S."/>
            <person name="Nakazaki N."/>
            <person name="Naruo K."/>
            <person name="Okumura S."/>
            <person name="Shinpo S."/>
            <person name="Takeuchi C."/>
            <person name="Wada T."/>
            <person name="Watanabe A."/>
            <person name="Yamada M."/>
            <person name="Yasuda M."/>
            <person name="Sato S."/>
            <person name="de la Bastide M."/>
            <person name="Huang E."/>
            <person name="Spiegel L."/>
            <person name="Gnoj L."/>
            <person name="O'Shaughnessy A."/>
            <person name="Preston R."/>
            <person name="Habermann K."/>
            <person name="Murray J."/>
            <person name="Johnson D."/>
            <person name="Rohlfing T."/>
            <person name="Nelson J."/>
            <person name="Stoneking T."/>
            <person name="Pepin K."/>
            <person name="Spieth J."/>
            <person name="Sekhon M."/>
            <person name="Armstrong J."/>
            <person name="Becker M."/>
            <person name="Belter E."/>
            <person name="Cordum H."/>
            <person name="Cordes M."/>
            <person name="Courtney L."/>
            <person name="Courtney W."/>
            <person name="Dante M."/>
            <person name="Du H."/>
            <person name="Edwards J."/>
            <person name="Fryman J."/>
            <person name="Haakensen B."/>
            <person name="Lamar E."/>
            <person name="Latreille P."/>
            <person name="Leonard S."/>
            <person name="Meyer R."/>
            <person name="Mulvaney E."/>
            <person name="Ozersky P."/>
            <person name="Riley A."/>
            <person name="Strowmatt C."/>
            <person name="Wagner-McPherson C."/>
            <person name="Wollam A."/>
            <person name="Yoakum M."/>
            <person name="Bell M."/>
            <person name="Dedhia N."/>
            <person name="Parnell L."/>
            <person name="Shah R."/>
            <person name="Rodriguez M."/>
            <person name="Hoon See L."/>
            <person name="Vil D."/>
            <person name="Baker J."/>
            <person name="Kirchoff K."/>
            <person name="Toth K."/>
            <person name="King L."/>
            <person name="Bahret A."/>
            <person name="Miller B."/>
            <person name="Marra M.A."/>
            <person name="Martienssen R."/>
            <person name="McCombie W.R."/>
            <person name="Wilson R.K."/>
            <person name="Murphy G."/>
            <person name="Bancroft I."/>
            <person name="Volckaert G."/>
            <person name="Wambutt R."/>
            <person name="Duesterhoeft A."/>
            <person name="Stiekema W."/>
            <person name="Pohl T."/>
            <person name="Entian K.-D."/>
            <person name="Terryn N."/>
            <person name="Hartley N."/>
            <person name="Bent E."/>
            <person name="Johnson S."/>
            <person name="Langham S.-A."/>
            <person name="McCullagh B."/>
            <person name="Robben J."/>
            <person name="Grymonprez B."/>
            <person name="Zimmermann W."/>
            <person name="Ramsperger U."/>
            <person name="Wedler H."/>
            <person name="Balke K."/>
            <person name="Wedler E."/>
            <person name="Peters S."/>
            <person name="van Staveren M."/>
            <person name="Dirkse W."/>
            <person name="Mooijman P."/>
            <person name="Klein Lankhorst R."/>
            <person name="Weitzenegger T."/>
            <person name="Bothe G."/>
            <person name="Rose M."/>
            <person name="Hauf J."/>
            <person name="Berneiser S."/>
            <person name="Hempel S."/>
            <person name="Feldpausch M."/>
            <person name="Lamberth S."/>
            <person name="Villarroel R."/>
            <person name="Gielen J."/>
            <person name="Ardiles W."/>
            <person name="Bents O."/>
            <person name="Lemcke K."/>
            <person name="Kolesov G."/>
            <person name="Mayer K.F.X."/>
            <person name="Rudd S."/>
            <person name="Schoof H."/>
            <person name="Schueller C."/>
            <person name="Zaccaria P."/>
            <person name="Mewes H.-W."/>
            <person name="Bevan M."/>
            <person name="Fransz P.F."/>
        </authorList>
    </citation>
    <scope>NUCLEOTIDE SEQUENCE [LARGE SCALE GENOMIC DNA]</scope>
    <source>
        <strain>cv. Columbia</strain>
    </source>
</reference>
<reference key="2">
    <citation type="journal article" date="2017" name="Plant J.">
        <title>Araport11: a complete reannotation of the Arabidopsis thaliana reference genome.</title>
        <authorList>
            <person name="Cheng C.Y."/>
            <person name="Krishnakumar V."/>
            <person name="Chan A.P."/>
            <person name="Thibaud-Nissen F."/>
            <person name="Schobel S."/>
            <person name="Town C.D."/>
        </authorList>
    </citation>
    <scope>GENOME REANNOTATION</scope>
    <source>
        <strain>cv. Columbia</strain>
    </source>
</reference>
<reference key="3">
    <citation type="journal article" date="2004" name="Carbohydr. Res.">
        <title>Pectin methylesterases: sequence-structural features and phylogenetic relationships.</title>
        <authorList>
            <person name="Markovic O."/>
            <person name="Janecek S."/>
        </authorList>
    </citation>
    <scope>GENE FAMILY</scope>
    <scope>NOMENCLATURE</scope>
</reference>
<reference key="4">
    <citation type="journal article" date="2006" name="Planta">
        <title>Comprehensive expression profiling of the pectin methylesterase gene family during silique development in Arabidopsis thaliana.</title>
        <authorList>
            <person name="Louvet R."/>
            <person name="Cavel E."/>
            <person name="Gutierrez L."/>
            <person name="Guenin S."/>
            <person name="Roger D."/>
            <person name="Gillet F."/>
            <person name="Guerineau F."/>
            <person name="Pelloux J."/>
        </authorList>
    </citation>
    <scope>TISSUE SPECIFICITY</scope>
    <scope>DEVELOPMENTAL STAGE</scope>
</reference>
<dbReference type="EC" id="3.1.1.11"/>
<dbReference type="EMBL" id="AC007399">
    <property type="status" value="NOT_ANNOTATED_CDS"/>
    <property type="molecule type" value="Genomic_DNA"/>
</dbReference>
<dbReference type="EMBL" id="CP002688">
    <property type="protein sequence ID" value="AED93739.1"/>
    <property type="molecule type" value="Genomic_DNA"/>
</dbReference>
<dbReference type="RefSeq" id="NP_198139.1">
    <property type="nucleotide sequence ID" value="NM_122669.2"/>
</dbReference>
<dbReference type="SMR" id="Q3E8Z8"/>
<dbReference type="FunCoup" id="Q3E8Z8">
    <property type="interactions" value="210"/>
</dbReference>
<dbReference type="STRING" id="3702.Q3E8Z8"/>
<dbReference type="GlyCosmos" id="Q3E8Z8">
    <property type="glycosylation" value="8 sites, No reported glycans"/>
</dbReference>
<dbReference type="GlyGen" id="Q3E8Z8">
    <property type="glycosylation" value="11 sites"/>
</dbReference>
<dbReference type="PaxDb" id="3702-AT5G27870.1"/>
<dbReference type="ProteomicsDB" id="236575"/>
<dbReference type="EnsemblPlants" id="AT5G27870.1">
    <property type="protein sequence ID" value="AT5G27870.1"/>
    <property type="gene ID" value="AT5G27870"/>
</dbReference>
<dbReference type="GeneID" id="832850"/>
<dbReference type="Gramene" id="AT5G27870.1">
    <property type="protein sequence ID" value="AT5G27870.1"/>
    <property type="gene ID" value="AT5G27870"/>
</dbReference>
<dbReference type="KEGG" id="ath:AT5G27870"/>
<dbReference type="Araport" id="AT5G27870"/>
<dbReference type="TAIR" id="AT5G27870"/>
<dbReference type="eggNOG" id="ENOG502QPZF">
    <property type="taxonomic scope" value="Eukaryota"/>
</dbReference>
<dbReference type="HOGENOM" id="CLU_012243_9_0_1"/>
<dbReference type="InParanoid" id="Q3E8Z8"/>
<dbReference type="OMA" id="ADEAIFY"/>
<dbReference type="PhylomeDB" id="Q3E8Z8"/>
<dbReference type="BioCyc" id="ARA:AT5G27870-MONOMER"/>
<dbReference type="UniPathway" id="UPA00545">
    <property type="reaction ID" value="UER00823"/>
</dbReference>
<dbReference type="PRO" id="PR:Q3E8Z8"/>
<dbReference type="Proteomes" id="UP000006548">
    <property type="component" value="Chromosome 5"/>
</dbReference>
<dbReference type="ExpressionAtlas" id="Q3E8Z8">
    <property type="expression patterns" value="baseline and differential"/>
</dbReference>
<dbReference type="GO" id="GO:0016020">
    <property type="term" value="C:membrane"/>
    <property type="evidence" value="ECO:0007669"/>
    <property type="project" value="UniProtKB-SubCell"/>
</dbReference>
<dbReference type="GO" id="GO:0004857">
    <property type="term" value="F:enzyme inhibitor activity"/>
    <property type="evidence" value="ECO:0007669"/>
    <property type="project" value="InterPro"/>
</dbReference>
<dbReference type="GO" id="GO:0030599">
    <property type="term" value="F:pectinesterase activity"/>
    <property type="evidence" value="ECO:0007669"/>
    <property type="project" value="UniProtKB-EC"/>
</dbReference>
<dbReference type="GO" id="GO:0042545">
    <property type="term" value="P:cell wall modification"/>
    <property type="evidence" value="ECO:0007669"/>
    <property type="project" value="InterPro"/>
</dbReference>
<dbReference type="GO" id="GO:0045490">
    <property type="term" value="P:pectin catabolic process"/>
    <property type="evidence" value="ECO:0007669"/>
    <property type="project" value="UniProtKB-UniPathway"/>
</dbReference>
<dbReference type="CDD" id="cd15798">
    <property type="entry name" value="PMEI-like_3"/>
    <property type="match status" value="1"/>
</dbReference>
<dbReference type="FunFam" id="1.20.140.40:FF:000001">
    <property type="entry name" value="Pectinesterase"/>
    <property type="match status" value="1"/>
</dbReference>
<dbReference type="FunFam" id="2.160.20.10:FF:000001">
    <property type="entry name" value="Pectinesterase"/>
    <property type="match status" value="1"/>
</dbReference>
<dbReference type="Gene3D" id="1.20.140.40">
    <property type="entry name" value="Invertase/pectin methylesterase inhibitor family protein"/>
    <property type="match status" value="1"/>
</dbReference>
<dbReference type="Gene3D" id="2.160.20.10">
    <property type="entry name" value="Single-stranded right-handed beta-helix, Pectin lyase-like"/>
    <property type="match status" value="1"/>
</dbReference>
<dbReference type="InterPro" id="IPR035513">
    <property type="entry name" value="Invertase/methylesterase_inhib"/>
</dbReference>
<dbReference type="InterPro" id="IPR012334">
    <property type="entry name" value="Pectin_lyas_fold"/>
</dbReference>
<dbReference type="InterPro" id="IPR011050">
    <property type="entry name" value="Pectin_lyase_fold/virulence"/>
</dbReference>
<dbReference type="InterPro" id="IPR000070">
    <property type="entry name" value="Pectinesterase_cat"/>
</dbReference>
<dbReference type="InterPro" id="IPR006501">
    <property type="entry name" value="Pectinesterase_inhib_dom"/>
</dbReference>
<dbReference type="NCBIfam" id="TIGR01614">
    <property type="entry name" value="PME_inhib"/>
    <property type="match status" value="1"/>
</dbReference>
<dbReference type="PANTHER" id="PTHR31707">
    <property type="entry name" value="PECTINESTERASE"/>
    <property type="match status" value="1"/>
</dbReference>
<dbReference type="Pfam" id="PF01095">
    <property type="entry name" value="Pectinesterase"/>
    <property type="match status" value="1"/>
</dbReference>
<dbReference type="Pfam" id="PF04043">
    <property type="entry name" value="PMEI"/>
    <property type="match status" value="1"/>
</dbReference>
<dbReference type="SMART" id="SM00856">
    <property type="entry name" value="PMEI"/>
    <property type="match status" value="1"/>
</dbReference>
<dbReference type="SUPFAM" id="SSF51126">
    <property type="entry name" value="Pectin lyase-like"/>
    <property type="match status" value="1"/>
</dbReference>
<dbReference type="SUPFAM" id="SSF101148">
    <property type="entry name" value="Plant invertase/pectin methylesterase inhibitor"/>
    <property type="match status" value="1"/>
</dbReference>
<keyword id="KW-0063">Aspartyl esterase</keyword>
<keyword id="KW-1015">Disulfide bond</keyword>
<keyword id="KW-0325">Glycoprotein</keyword>
<keyword id="KW-0378">Hydrolase</keyword>
<keyword id="KW-0472">Membrane</keyword>
<keyword id="KW-1185">Reference proteome</keyword>
<keyword id="KW-0812">Transmembrane</keyword>
<keyword id="KW-1133">Transmembrane helix</keyword>
<sequence length="732" mass="78477">MSYGYDDEDAKRKKRYVIISISSVLLISMVVAVTIGVSVNKSDNAGDEEITTSVKAIKDVCAPTDYKETCEDTLRKDAKDTSDPLELVKTAFNATMKQISDVAKKSQTMIELQKDPRAKMALDQCKELMDYAIGELSKSFEELGKFEFHKVDEALVKLRIWLSATISHEQTCLDGFQGTQGNAGETIKKALKTAVQLTHNGLAMVTEMSNYLGQMQIPEMNSRRLLSQEFPSWMDARARRLLNAPMSEVKPDIVVAQDGSGQYKTINEALNFVPKKKNTTFVVHIKEGIYKEYVQVNRSMTHLVFIGDGPDKTVISGSKSYKDGITTYKTATVAIVGDHFIAKNIAFENTAGAIKHQAVAIRVLADESIFYNCKFDGYQDTLYAHSHRQFYRDCTISGTIDFLFGDAAAVFQNCTLLVRKPLLNQACPITAHGRKDPRESTGFVLQGCTIVGEPDYLAVKEQSKTYLGRPWKEYSRTIIMNTFIPDFVPPEGWQPWLGEFGLNTLFYSEVQNTGPGAAITKRVTWPGIKKLSDEEILKFTPAQYIQGDAWIPGKGVPYILGLFSGNGSTNSTVTGSSLSSNTTESSDSPSTVVTPSTSPPAGHLGSPSDTPSSVVSPSTSLPAGQLGAPPATPSMVVSPSTSPPAGHLGSPSDTPSSLVSPSTSPPAGHLGSPSDTPSSVVTPSASPSTSPSASPSVSPSAFPSASPSASPSASPSVSPSASPSASPQSSIG</sequence>
<name>PME28_ARATH</name>
<accession>Q3E8Z8</accession>
<evidence type="ECO:0000250" key="1"/>
<evidence type="ECO:0000255" key="2"/>
<evidence type="ECO:0000256" key="3">
    <source>
        <dbReference type="SAM" id="MobiDB-lite"/>
    </source>
</evidence>
<evidence type="ECO:0000269" key="4">
    <source>
    </source>
</evidence>
<evidence type="ECO:0000305" key="5"/>
<comment type="function">
    <text evidence="1">Acts in the modification of cell walls via demethylesterification of cell wall pectin.</text>
</comment>
<comment type="catalytic activity">
    <reaction>
        <text>[(1-&gt;4)-alpha-D-galacturonosyl methyl ester](n) + n H2O = [(1-&gt;4)-alpha-D-galacturonosyl](n) + n methanol + n H(+)</text>
        <dbReference type="Rhea" id="RHEA:22380"/>
        <dbReference type="Rhea" id="RHEA-COMP:14570"/>
        <dbReference type="Rhea" id="RHEA-COMP:14573"/>
        <dbReference type="ChEBI" id="CHEBI:15377"/>
        <dbReference type="ChEBI" id="CHEBI:15378"/>
        <dbReference type="ChEBI" id="CHEBI:17790"/>
        <dbReference type="ChEBI" id="CHEBI:140522"/>
        <dbReference type="ChEBI" id="CHEBI:140523"/>
        <dbReference type="EC" id="3.1.1.11"/>
    </reaction>
</comment>
<comment type="pathway">
    <text>Glycan metabolism; pectin degradation; 2-dehydro-3-deoxy-D-gluconate from pectin: step 1/5.</text>
</comment>
<comment type="subcellular location">
    <subcellularLocation>
        <location evidence="5">Membrane</location>
        <topology evidence="5">Single-pass membrane protein</topology>
    </subcellularLocation>
</comment>
<comment type="tissue specificity">
    <text evidence="4">Expressed in flower buds.</text>
</comment>
<comment type="miscellaneous">
    <text>The PMEI region may act as an autoinhibitory domain and prevent untimely PME activity during transport.</text>
</comment>
<comment type="similarity">
    <text evidence="5">In the N-terminal section; belongs to the PMEI family.</text>
</comment>
<comment type="similarity">
    <text evidence="5">In the C-terminal section; belongs to the pectinesterase family.</text>
</comment>
<gene>
    <name type="primary">PME28</name>
    <name type="synonym">ARATH28</name>
    <name type="ordered locus">At5g27870</name>
    <name type="ORF">F14I23.30</name>
</gene>
<feature type="chain" id="PRO_0000371681" description="Putative pectinesterase/pectinesterase inhibitor 28">
    <location>
        <begin position="1"/>
        <end position="732"/>
    </location>
</feature>
<feature type="transmembrane region" description="Helical" evidence="2">
    <location>
        <begin position="17"/>
        <end position="37"/>
    </location>
</feature>
<feature type="region of interest" description="Pectinesterase inhibitor 28">
    <location>
        <begin position="51"/>
        <end position="204"/>
    </location>
</feature>
<feature type="region of interest" description="Pectinesterase 28">
    <location>
        <begin position="252"/>
        <end position="548"/>
    </location>
</feature>
<feature type="region of interest" description="Disordered" evidence="3">
    <location>
        <begin position="570"/>
        <end position="732"/>
    </location>
</feature>
<feature type="compositionally biased region" description="Low complexity" evidence="3">
    <location>
        <begin position="570"/>
        <end position="620"/>
    </location>
</feature>
<feature type="compositionally biased region" description="Low complexity" evidence="3">
    <location>
        <begin position="633"/>
        <end position="732"/>
    </location>
</feature>
<feature type="active site" description="Proton donor; for pectinesterase activity" evidence="1">
    <location>
        <position position="380"/>
    </location>
</feature>
<feature type="active site" description="Nucleophile; for pectinesterase activity" evidence="1">
    <location>
        <position position="401"/>
    </location>
</feature>
<feature type="binding site" evidence="1">
    <location>
        <position position="327"/>
    </location>
    <ligand>
        <name>substrate</name>
        <note>for pectinesterase activity</note>
    </ligand>
</feature>
<feature type="binding site" evidence="1">
    <location>
        <position position="357"/>
    </location>
    <ligand>
        <name>substrate</name>
        <note>for pectinesterase activity</note>
    </ligand>
</feature>
<feature type="binding site" evidence="1">
    <location>
        <position position="469"/>
    </location>
    <ligand>
        <name>substrate</name>
        <note>for pectinesterase activity</note>
    </ligand>
</feature>
<feature type="binding site" evidence="1">
    <location>
        <position position="471"/>
    </location>
    <ligand>
        <name>substrate</name>
        <note>for pectinesterase activity</note>
    </ligand>
</feature>
<feature type="site" description="Transition state stabilizer" evidence="1">
    <location>
        <position position="379"/>
    </location>
</feature>
<feature type="glycosylation site" description="N-linked (GlcNAc...) asparagine" evidence="2">
    <location>
        <position position="40"/>
    </location>
</feature>
<feature type="glycosylation site" description="N-linked (GlcNAc...) asparagine" evidence="2">
    <location>
        <position position="93"/>
    </location>
</feature>
<feature type="glycosylation site" description="N-linked (GlcNAc...) asparagine" evidence="2">
    <location>
        <position position="278"/>
    </location>
</feature>
<feature type="glycosylation site" description="N-linked (GlcNAc...) asparagine" evidence="2">
    <location>
        <position position="297"/>
    </location>
</feature>
<feature type="glycosylation site" description="N-linked (GlcNAc...) asparagine" evidence="2">
    <location>
        <position position="413"/>
    </location>
</feature>
<feature type="glycosylation site" description="N-linked (GlcNAc...) asparagine" evidence="2">
    <location>
        <position position="566"/>
    </location>
</feature>
<feature type="glycosylation site" description="N-linked (GlcNAc...) asparagine" evidence="2">
    <location>
        <position position="570"/>
    </location>
</feature>
<feature type="glycosylation site" description="N-linked (GlcNAc...) asparagine" evidence="2">
    <location>
        <position position="581"/>
    </location>
</feature>
<feature type="disulfide bond" evidence="1">
    <location>
        <begin position="394"/>
        <end position="414"/>
    </location>
</feature>